<comment type="function">
    <text evidence="1">Pyrophosphatase that catalyzes the hydrolysis of nucleoside triphosphates to their monophosphate derivatives, with a high preference for the non-canonical purine nucleotides XTP (xanthosine triphosphate), dITP (deoxyinosine triphosphate) and ITP. Seems to function as a house-cleaning enzyme that removes non-canonical purine nucleotides from the nucleotide pool, thus preventing their incorporation into DNA/RNA and avoiding chromosomal lesions.</text>
</comment>
<comment type="catalytic activity">
    <reaction evidence="1">
        <text>XTP + H2O = XMP + diphosphate + H(+)</text>
        <dbReference type="Rhea" id="RHEA:28610"/>
        <dbReference type="ChEBI" id="CHEBI:15377"/>
        <dbReference type="ChEBI" id="CHEBI:15378"/>
        <dbReference type="ChEBI" id="CHEBI:33019"/>
        <dbReference type="ChEBI" id="CHEBI:57464"/>
        <dbReference type="ChEBI" id="CHEBI:61314"/>
        <dbReference type="EC" id="3.6.1.66"/>
    </reaction>
</comment>
<comment type="catalytic activity">
    <reaction evidence="1">
        <text>dITP + H2O = dIMP + diphosphate + H(+)</text>
        <dbReference type="Rhea" id="RHEA:28342"/>
        <dbReference type="ChEBI" id="CHEBI:15377"/>
        <dbReference type="ChEBI" id="CHEBI:15378"/>
        <dbReference type="ChEBI" id="CHEBI:33019"/>
        <dbReference type="ChEBI" id="CHEBI:61194"/>
        <dbReference type="ChEBI" id="CHEBI:61382"/>
        <dbReference type="EC" id="3.6.1.66"/>
    </reaction>
</comment>
<comment type="catalytic activity">
    <reaction evidence="1">
        <text>ITP + H2O = IMP + diphosphate + H(+)</text>
        <dbReference type="Rhea" id="RHEA:29399"/>
        <dbReference type="ChEBI" id="CHEBI:15377"/>
        <dbReference type="ChEBI" id="CHEBI:15378"/>
        <dbReference type="ChEBI" id="CHEBI:33019"/>
        <dbReference type="ChEBI" id="CHEBI:58053"/>
        <dbReference type="ChEBI" id="CHEBI:61402"/>
        <dbReference type="EC" id="3.6.1.66"/>
    </reaction>
</comment>
<comment type="cofactor">
    <cofactor evidence="1">
        <name>Mg(2+)</name>
        <dbReference type="ChEBI" id="CHEBI:18420"/>
    </cofactor>
    <text evidence="1">Binds 1 Mg(2+) ion per subunit.</text>
</comment>
<comment type="subunit">
    <text evidence="1">Homodimer.</text>
</comment>
<comment type="similarity">
    <text evidence="1">Belongs to the HAM1 NTPase family.</text>
</comment>
<dbReference type="EC" id="3.6.1.66" evidence="1"/>
<dbReference type="EMBL" id="AE002098">
    <property type="protein sequence ID" value="AAF41062.1"/>
    <property type="molecule type" value="Genomic_DNA"/>
</dbReference>
<dbReference type="PIR" id="D81175">
    <property type="entry name" value="D81175"/>
</dbReference>
<dbReference type="RefSeq" id="NP_273682.1">
    <property type="nucleotide sequence ID" value="NC_003112.2"/>
</dbReference>
<dbReference type="SMR" id="Q9K0G6"/>
<dbReference type="FunCoup" id="Q9K0G6">
    <property type="interactions" value="478"/>
</dbReference>
<dbReference type="STRING" id="122586.NMB0639"/>
<dbReference type="PaxDb" id="122586-NMB0639"/>
<dbReference type="KEGG" id="nme:NMB0639"/>
<dbReference type="PATRIC" id="fig|122586.8.peg.808"/>
<dbReference type="HOGENOM" id="CLU_082080_0_3_4"/>
<dbReference type="InParanoid" id="Q9K0G6"/>
<dbReference type="OrthoDB" id="9807456at2"/>
<dbReference type="Proteomes" id="UP000000425">
    <property type="component" value="Chromosome"/>
</dbReference>
<dbReference type="GO" id="GO:0005737">
    <property type="term" value="C:cytoplasm"/>
    <property type="evidence" value="ECO:0000318"/>
    <property type="project" value="GO_Central"/>
</dbReference>
<dbReference type="GO" id="GO:0005829">
    <property type="term" value="C:cytosol"/>
    <property type="evidence" value="ECO:0000318"/>
    <property type="project" value="GO_Central"/>
</dbReference>
<dbReference type="GO" id="GO:0035870">
    <property type="term" value="F:dITP diphosphatase activity"/>
    <property type="evidence" value="ECO:0007669"/>
    <property type="project" value="RHEA"/>
</dbReference>
<dbReference type="GO" id="GO:0036220">
    <property type="term" value="F:ITP diphosphatase activity"/>
    <property type="evidence" value="ECO:0007669"/>
    <property type="project" value="UniProtKB-EC"/>
</dbReference>
<dbReference type="GO" id="GO:0046872">
    <property type="term" value="F:metal ion binding"/>
    <property type="evidence" value="ECO:0007669"/>
    <property type="project" value="UniProtKB-KW"/>
</dbReference>
<dbReference type="GO" id="GO:0047429">
    <property type="term" value="F:nucleoside triphosphate diphosphatase activity"/>
    <property type="evidence" value="ECO:0000318"/>
    <property type="project" value="GO_Central"/>
</dbReference>
<dbReference type="GO" id="GO:0000166">
    <property type="term" value="F:nucleotide binding"/>
    <property type="evidence" value="ECO:0007669"/>
    <property type="project" value="UniProtKB-KW"/>
</dbReference>
<dbReference type="GO" id="GO:0017111">
    <property type="term" value="F:ribonucleoside triphosphate phosphatase activity"/>
    <property type="evidence" value="ECO:0007669"/>
    <property type="project" value="InterPro"/>
</dbReference>
<dbReference type="GO" id="GO:0036222">
    <property type="term" value="F:XTP diphosphatase activity"/>
    <property type="evidence" value="ECO:0007669"/>
    <property type="project" value="RHEA"/>
</dbReference>
<dbReference type="GO" id="GO:0009143">
    <property type="term" value="P:nucleoside triphosphate catabolic process"/>
    <property type="evidence" value="ECO:0000318"/>
    <property type="project" value="GO_Central"/>
</dbReference>
<dbReference type="GO" id="GO:0009117">
    <property type="term" value="P:nucleotide metabolic process"/>
    <property type="evidence" value="ECO:0007669"/>
    <property type="project" value="UniProtKB-KW"/>
</dbReference>
<dbReference type="GO" id="GO:0009146">
    <property type="term" value="P:purine nucleoside triphosphate catabolic process"/>
    <property type="evidence" value="ECO:0007669"/>
    <property type="project" value="UniProtKB-UniRule"/>
</dbReference>
<dbReference type="CDD" id="cd00515">
    <property type="entry name" value="HAM1"/>
    <property type="match status" value="1"/>
</dbReference>
<dbReference type="FunFam" id="3.90.950.10:FF:000001">
    <property type="entry name" value="dITP/XTP pyrophosphatase"/>
    <property type="match status" value="1"/>
</dbReference>
<dbReference type="Gene3D" id="3.90.950.10">
    <property type="match status" value="1"/>
</dbReference>
<dbReference type="HAMAP" id="MF_01405">
    <property type="entry name" value="Non_canon_purine_NTPase"/>
    <property type="match status" value="1"/>
</dbReference>
<dbReference type="InterPro" id="IPR020922">
    <property type="entry name" value="dITP/XTP_pyrophosphatase"/>
</dbReference>
<dbReference type="InterPro" id="IPR029001">
    <property type="entry name" value="ITPase-like_fam"/>
</dbReference>
<dbReference type="InterPro" id="IPR002637">
    <property type="entry name" value="RdgB/HAM1"/>
</dbReference>
<dbReference type="NCBIfam" id="TIGR00042">
    <property type="entry name" value="RdgB/HAM1 family non-canonical purine NTP pyrophosphatase"/>
    <property type="match status" value="1"/>
</dbReference>
<dbReference type="PANTHER" id="PTHR11067:SF9">
    <property type="entry name" value="INOSINE TRIPHOSPHATE PYROPHOSPHATASE"/>
    <property type="match status" value="1"/>
</dbReference>
<dbReference type="PANTHER" id="PTHR11067">
    <property type="entry name" value="INOSINE TRIPHOSPHATE PYROPHOSPHATASE/HAM1 PROTEIN"/>
    <property type="match status" value="1"/>
</dbReference>
<dbReference type="Pfam" id="PF01725">
    <property type="entry name" value="Ham1p_like"/>
    <property type="match status" value="1"/>
</dbReference>
<dbReference type="SUPFAM" id="SSF52972">
    <property type="entry name" value="ITPase-like"/>
    <property type="match status" value="1"/>
</dbReference>
<sequence length="199" mass="21508">MSEKPEKIVLASGNAGKLEEFGNLFKPYSITVLPQSAFGIPECPEPYPTFVENALAKARHAAKYSGLPALADDSGICAAALNGAPGIHSARYAGDNPKSDTANNLKLAAELVGKADKSCCYVCVLVFVRHKDDPRPIIAEGVWHGQWNDTPLGQNGFGYDPYFYLPEHGKTAAELDTEVKNRESHRAQALAELLRKLAL</sequence>
<gene>
    <name type="ordered locus">NMB0639</name>
</gene>
<proteinExistence type="inferred from homology"/>
<protein>
    <recommendedName>
        <fullName evidence="1">dITP/XTP pyrophosphatase</fullName>
        <ecNumber evidence="1">3.6.1.66</ecNumber>
    </recommendedName>
    <alternativeName>
        <fullName evidence="1">Non-canonical purine NTP pyrophosphatase</fullName>
    </alternativeName>
    <alternativeName>
        <fullName evidence="1">Non-standard purine NTP pyrophosphatase</fullName>
    </alternativeName>
    <alternativeName>
        <fullName evidence="1">Nucleoside-triphosphate diphosphatase</fullName>
    </alternativeName>
    <alternativeName>
        <fullName evidence="1">Nucleoside-triphosphate pyrophosphatase</fullName>
        <shortName evidence="1">NTPase</shortName>
    </alternativeName>
</protein>
<name>IXTPA_NEIMB</name>
<keyword id="KW-0378">Hydrolase</keyword>
<keyword id="KW-0460">Magnesium</keyword>
<keyword id="KW-0479">Metal-binding</keyword>
<keyword id="KW-0546">Nucleotide metabolism</keyword>
<keyword id="KW-0547">Nucleotide-binding</keyword>
<keyword id="KW-1185">Reference proteome</keyword>
<reference key="1">
    <citation type="journal article" date="2000" name="Science">
        <title>Complete genome sequence of Neisseria meningitidis serogroup B strain MC58.</title>
        <authorList>
            <person name="Tettelin H."/>
            <person name="Saunders N.J."/>
            <person name="Heidelberg J.F."/>
            <person name="Jeffries A.C."/>
            <person name="Nelson K.E."/>
            <person name="Eisen J.A."/>
            <person name="Ketchum K.A."/>
            <person name="Hood D.W."/>
            <person name="Peden J.F."/>
            <person name="Dodson R.J."/>
            <person name="Nelson W.C."/>
            <person name="Gwinn M.L."/>
            <person name="DeBoy R.T."/>
            <person name="Peterson J.D."/>
            <person name="Hickey E.K."/>
            <person name="Haft D.H."/>
            <person name="Salzberg S.L."/>
            <person name="White O."/>
            <person name="Fleischmann R.D."/>
            <person name="Dougherty B.A."/>
            <person name="Mason T.M."/>
            <person name="Ciecko A."/>
            <person name="Parksey D.S."/>
            <person name="Blair E."/>
            <person name="Cittone H."/>
            <person name="Clark E.B."/>
            <person name="Cotton M.D."/>
            <person name="Utterback T.R."/>
            <person name="Khouri H.M."/>
            <person name="Qin H."/>
            <person name="Vamathevan J.J."/>
            <person name="Gill J."/>
            <person name="Scarlato V."/>
            <person name="Masignani V."/>
            <person name="Pizza M."/>
            <person name="Grandi G."/>
            <person name="Sun L."/>
            <person name="Smith H.O."/>
            <person name="Fraser C.M."/>
            <person name="Moxon E.R."/>
            <person name="Rappuoli R."/>
            <person name="Venter J.C."/>
        </authorList>
    </citation>
    <scope>NUCLEOTIDE SEQUENCE [LARGE SCALE GENOMIC DNA]</scope>
    <source>
        <strain>ATCC BAA-335 / MC58</strain>
    </source>
</reference>
<organism>
    <name type="scientific">Neisseria meningitidis serogroup B (strain ATCC BAA-335 / MC58)</name>
    <dbReference type="NCBI Taxonomy" id="122586"/>
    <lineage>
        <taxon>Bacteria</taxon>
        <taxon>Pseudomonadati</taxon>
        <taxon>Pseudomonadota</taxon>
        <taxon>Betaproteobacteria</taxon>
        <taxon>Neisseriales</taxon>
        <taxon>Neisseriaceae</taxon>
        <taxon>Neisseria</taxon>
    </lineage>
</organism>
<feature type="chain" id="PRO_0000178200" description="dITP/XTP pyrophosphatase">
    <location>
        <begin position="1"/>
        <end position="199"/>
    </location>
</feature>
<feature type="active site" description="Proton acceptor" evidence="1">
    <location>
        <position position="73"/>
    </location>
</feature>
<feature type="binding site" evidence="1">
    <location>
        <begin position="12"/>
        <end position="17"/>
    </location>
    <ligand>
        <name>substrate</name>
    </ligand>
</feature>
<feature type="binding site" evidence="1">
    <location>
        <position position="73"/>
    </location>
    <ligand>
        <name>Mg(2+)</name>
        <dbReference type="ChEBI" id="CHEBI:18420"/>
    </ligand>
</feature>
<feature type="binding site" evidence="1">
    <location>
        <position position="74"/>
    </location>
    <ligand>
        <name>substrate</name>
    </ligand>
</feature>
<feature type="binding site" evidence="1">
    <location>
        <begin position="157"/>
        <end position="160"/>
    </location>
    <ligand>
        <name>substrate</name>
    </ligand>
</feature>
<feature type="binding site" evidence="1">
    <location>
        <position position="180"/>
    </location>
    <ligand>
        <name>substrate</name>
    </ligand>
</feature>
<feature type="binding site" evidence="1">
    <location>
        <begin position="185"/>
        <end position="186"/>
    </location>
    <ligand>
        <name>substrate</name>
    </ligand>
</feature>
<evidence type="ECO:0000255" key="1">
    <source>
        <dbReference type="HAMAP-Rule" id="MF_01405"/>
    </source>
</evidence>
<accession>Q9K0G6</accession>